<organism>
    <name type="scientific">Homo sapiens</name>
    <name type="common">Human</name>
    <dbReference type="NCBI Taxonomy" id="9606"/>
    <lineage>
        <taxon>Eukaryota</taxon>
        <taxon>Metazoa</taxon>
        <taxon>Chordata</taxon>
        <taxon>Craniata</taxon>
        <taxon>Vertebrata</taxon>
        <taxon>Euteleostomi</taxon>
        <taxon>Mammalia</taxon>
        <taxon>Eutheria</taxon>
        <taxon>Euarchontoglires</taxon>
        <taxon>Primates</taxon>
        <taxon>Haplorrhini</taxon>
        <taxon>Catarrhini</taxon>
        <taxon>Hominidae</taxon>
        <taxon>Homo</taxon>
    </lineage>
</organism>
<keyword id="KW-0025">Alternative splicing</keyword>
<keyword id="KW-0986">Amelogenesis imperfecta</keyword>
<keyword id="KW-0067">ATP-binding</keyword>
<keyword id="KW-0963">Cytoplasm</keyword>
<keyword id="KW-0209">Deafness</keyword>
<keyword id="KW-0225">Disease variant</keyword>
<keyword id="KW-0378">Hydrolase</keyword>
<keyword id="KW-0472">Membrane</keyword>
<keyword id="KW-0547">Nucleotide-binding</keyword>
<keyword id="KW-0576">Peroxisome</keyword>
<keyword id="KW-0962">Peroxisome biogenesis</keyword>
<keyword id="KW-0958">Peroxisome biogenesis disorder</keyword>
<keyword id="KW-0597">Phosphoprotein</keyword>
<keyword id="KW-0653">Protein transport</keyword>
<keyword id="KW-1267">Proteomics identification</keyword>
<keyword id="KW-1185">Reference proteome</keyword>
<keyword id="KW-0677">Repeat</keyword>
<keyword id="KW-0813">Transport</keyword>
<keyword id="KW-0861">Zellweger syndrome</keyword>
<evidence type="ECO:0000255" key="1"/>
<evidence type="ECO:0000256" key="2">
    <source>
        <dbReference type="SAM" id="MobiDB-lite"/>
    </source>
</evidence>
<evidence type="ECO:0000269" key="3">
    <source>
    </source>
</evidence>
<evidence type="ECO:0000269" key="4">
    <source>
    </source>
</evidence>
<evidence type="ECO:0000269" key="5">
    <source>
    </source>
</evidence>
<evidence type="ECO:0000269" key="6">
    <source>
    </source>
</evidence>
<evidence type="ECO:0000269" key="7">
    <source>
    </source>
</evidence>
<evidence type="ECO:0000269" key="8">
    <source>
    </source>
</evidence>
<evidence type="ECO:0000269" key="9">
    <source>
    </source>
</evidence>
<evidence type="ECO:0000269" key="10">
    <source>
    </source>
</evidence>
<evidence type="ECO:0000269" key="11">
    <source>
    </source>
</evidence>
<evidence type="ECO:0000269" key="12">
    <source>
    </source>
</evidence>
<evidence type="ECO:0000269" key="13">
    <source>
    </source>
</evidence>
<evidence type="ECO:0000269" key="14">
    <source>
    </source>
</evidence>
<evidence type="ECO:0000269" key="15">
    <source>
    </source>
</evidence>
<evidence type="ECO:0000269" key="16">
    <source>
    </source>
</evidence>
<evidence type="ECO:0000269" key="17">
    <source>
    </source>
</evidence>
<evidence type="ECO:0000269" key="18">
    <source>
    </source>
</evidence>
<evidence type="ECO:0000269" key="19">
    <source>
    </source>
</evidence>
<evidence type="ECO:0000303" key="20">
    <source>
    </source>
</evidence>
<evidence type="ECO:0000303" key="21">
    <source>
    </source>
</evidence>
<evidence type="ECO:0000305" key="22"/>
<evidence type="ECO:0000312" key="23">
    <source>
        <dbReference type="HGNC" id="HGNC:8850"/>
    </source>
</evidence>
<evidence type="ECO:0007744" key="24">
    <source>
    </source>
</evidence>
<evidence type="ECO:0007744" key="25">
    <source>
    </source>
</evidence>
<accession>O43933</accession>
<accession>A4D1G3</accession>
<accession>A8KA90</accession>
<accession>B4DIM7</accession>
<accession>E9PE75</accession>
<accession>Q96S71</accession>
<accession>Q96S72</accession>
<accession>Q96S73</accession>
<accession>Q99994</accession>
<proteinExistence type="evidence at protein level"/>
<dbReference type="EC" id="3.6.4.-" evidence="8"/>
<dbReference type="EMBL" id="AF030356">
    <property type="protein sequence ID" value="AAB99758.1"/>
    <property type="molecule type" value="mRNA"/>
</dbReference>
<dbReference type="EMBL" id="AF026086">
    <property type="protein sequence ID" value="AAB87880.1"/>
    <property type="molecule type" value="mRNA"/>
</dbReference>
<dbReference type="EMBL" id="AB008112">
    <property type="protein sequence ID" value="BAA85162.1"/>
    <property type="molecule type" value="mRNA"/>
</dbReference>
<dbReference type="EMBL" id="AB052090">
    <property type="protein sequence ID" value="BAB59061.1"/>
    <property type="molecule type" value="mRNA"/>
</dbReference>
<dbReference type="EMBL" id="AB052091">
    <property type="protein sequence ID" value="BAB59062.1"/>
    <property type="molecule type" value="mRNA"/>
</dbReference>
<dbReference type="EMBL" id="AB052092">
    <property type="protein sequence ID" value="BAB59063.1"/>
    <property type="molecule type" value="mRNA"/>
</dbReference>
<dbReference type="EMBL" id="AK292955">
    <property type="protein sequence ID" value="BAF85644.1"/>
    <property type="molecule type" value="mRNA"/>
</dbReference>
<dbReference type="EMBL" id="AK295686">
    <property type="protein sequence ID" value="BAG58539.1"/>
    <property type="molecule type" value="mRNA"/>
</dbReference>
<dbReference type="EMBL" id="AC007566">
    <property type="status" value="NOT_ANNOTATED_CDS"/>
    <property type="molecule type" value="Genomic_DNA"/>
</dbReference>
<dbReference type="EMBL" id="AC000064">
    <property type="protein sequence ID" value="AAB46346.1"/>
    <property type="status" value="ALT_SEQ"/>
    <property type="molecule type" value="Genomic_DNA"/>
</dbReference>
<dbReference type="EMBL" id="KF458517">
    <property type="status" value="NOT_ANNOTATED_CDS"/>
    <property type="molecule type" value="Genomic_DNA"/>
</dbReference>
<dbReference type="EMBL" id="CH236949">
    <property type="protein sequence ID" value="EAL24149.1"/>
    <property type="molecule type" value="Genomic_DNA"/>
</dbReference>
<dbReference type="EMBL" id="CH471091">
    <property type="protein sequence ID" value="EAW76840.1"/>
    <property type="molecule type" value="Genomic_DNA"/>
</dbReference>
<dbReference type="EMBL" id="BC035575">
    <property type="protein sequence ID" value="AAH35575.1"/>
    <property type="molecule type" value="mRNA"/>
</dbReference>
<dbReference type="CCDS" id="CCDS5627.1">
    <molecule id="O43933-1"/>
</dbReference>
<dbReference type="RefSeq" id="NP_000457.1">
    <molecule id="O43933-1"/>
    <property type="nucleotide sequence ID" value="NM_000466.3"/>
</dbReference>
<dbReference type="RefSeq" id="NP_001269606.1">
    <property type="nucleotide sequence ID" value="NM_001282677.1"/>
</dbReference>
<dbReference type="RefSeq" id="NP_001269607.1">
    <property type="nucleotide sequence ID" value="NM_001282678.1"/>
</dbReference>
<dbReference type="SMR" id="O43933"/>
<dbReference type="BioGRID" id="111212">
    <property type="interactions" value="107"/>
</dbReference>
<dbReference type="ComplexPortal" id="CPX-8808">
    <property type="entry name" value="Peroxisomal receptor export module complex"/>
</dbReference>
<dbReference type="CORUM" id="O43933"/>
<dbReference type="FunCoup" id="O43933">
    <property type="interactions" value="2723"/>
</dbReference>
<dbReference type="IntAct" id="O43933">
    <property type="interactions" value="95"/>
</dbReference>
<dbReference type="MINT" id="O43933"/>
<dbReference type="STRING" id="9606.ENSP00000248633"/>
<dbReference type="TCDB" id="3.A.20.1.1">
    <property type="family name" value="the peroxisomal protein importer (ppi) family"/>
</dbReference>
<dbReference type="GlyGen" id="O43933">
    <property type="glycosylation" value="1 site"/>
</dbReference>
<dbReference type="iPTMnet" id="O43933"/>
<dbReference type="PhosphoSitePlus" id="O43933"/>
<dbReference type="BioMuta" id="PEX1"/>
<dbReference type="jPOST" id="O43933"/>
<dbReference type="MassIVE" id="O43933"/>
<dbReference type="PaxDb" id="9606-ENSP00000248633"/>
<dbReference type="PeptideAtlas" id="O43933"/>
<dbReference type="ProteomicsDB" id="19827"/>
<dbReference type="ProteomicsDB" id="49243">
    <molecule id="O43933-1"/>
</dbReference>
<dbReference type="Pumba" id="O43933"/>
<dbReference type="Antibodypedia" id="15612">
    <property type="antibodies" value="191 antibodies from 31 providers"/>
</dbReference>
<dbReference type="DNASU" id="5189"/>
<dbReference type="Ensembl" id="ENST00000248633.9">
    <molecule id="O43933-1"/>
    <property type="protein sequence ID" value="ENSP00000248633.4"/>
    <property type="gene ID" value="ENSG00000127980.16"/>
</dbReference>
<dbReference type="Ensembl" id="ENST00000438045.5">
    <molecule id="O43933-2"/>
    <property type="protein sequence ID" value="ENSP00000410438.1"/>
    <property type="gene ID" value="ENSG00000127980.16"/>
</dbReference>
<dbReference type="GeneID" id="5189"/>
<dbReference type="KEGG" id="hsa:5189"/>
<dbReference type="MANE-Select" id="ENST00000248633.9">
    <property type="protein sequence ID" value="ENSP00000248633.4"/>
    <property type="RefSeq nucleotide sequence ID" value="NM_000466.3"/>
    <property type="RefSeq protein sequence ID" value="NP_000457.1"/>
</dbReference>
<dbReference type="UCSC" id="uc003uly.4">
    <molecule id="O43933-1"/>
    <property type="organism name" value="human"/>
</dbReference>
<dbReference type="AGR" id="HGNC:8850"/>
<dbReference type="CTD" id="5189"/>
<dbReference type="DisGeNET" id="5189"/>
<dbReference type="GeneCards" id="PEX1"/>
<dbReference type="GeneReviews" id="PEX1"/>
<dbReference type="HGNC" id="HGNC:8850">
    <property type="gene designation" value="PEX1"/>
</dbReference>
<dbReference type="HPA" id="ENSG00000127980">
    <property type="expression patterns" value="Low tissue specificity"/>
</dbReference>
<dbReference type="MalaCards" id="PEX1"/>
<dbReference type="MIM" id="214100">
    <property type="type" value="phenotype"/>
</dbReference>
<dbReference type="MIM" id="234580">
    <property type="type" value="phenotype"/>
</dbReference>
<dbReference type="MIM" id="601539">
    <property type="type" value="phenotype"/>
</dbReference>
<dbReference type="MIM" id="602136">
    <property type="type" value="gene"/>
</dbReference>
<dbReference type="neXtProt" id="NX_O43933"/>
<dbReference type="OpenTargets" id="ENSG00000127980"/>
<dbReference type="Orphanet" id="3220">
    <property type="disease" value="Deafness-enamel hypoplasia-nail defects syndrome"/>
</dbReference>
<dbReference type="Orphanet" id="772">
    <property type="disease" value="Infantile Refsum disease"/>
</dbReference>
<dbReference type="Orphanet" id="44">
    <property type="disease" value="Neonatal adrenoleukodystrophy"/>
</dbReference>
<dbReference type="Orphanet" id="912">
    <property type="disease" value="Zellweger syndrome"/>
</dbReference>
<dbReference type="PharmGKB" id="PA33192"/>
<dbReference type="VEuPathDB" id="HostDB:ENSG00000127980"/>
<dbReference type="eggNOG" id="KOG0735">
    <property type="taxonomic scope" value="Eukaryota"/>
</dbReference>
<dbReference type="GeneTree" id="ENSGT00550000075032"/>
<dbReference type="HOGENOM" id="CLU_000688_1_1_1"/>
<dbReference type="InParanoid" id="O43933"/>
<dbReference type="OMA" id="PVWVEKS"/>
<dbReference type="OrthoDB" id="8173462at2759"/>
<dbReference type="PAN-GO" id="O43933">
    <property type="GO annotations" value="4 GO annotations based on evolutionary models"/>
</dbReference>
<dbReference type="PhylomeDB" id="O43933"/>
<dbReference type="TreeFam" id="TF106447"/>
<dbReference type="BRENDA" id="3.6.4.7">
    <property type="organism ID" value="2681"/>
</dbReference>
<dbReference type="PathwayCommons" id="O43933"/>
<dbReference type="Reactome" id="R-HSA-9033241">
    <property type="pathway name" value="Peroxisomal protein import"/>
</dbReference>
<dbReference type="SignaLink" id="O43933"/>
<dbReference type="SIGNOR" id="O43933"/>
<dbReference type="BioGRID-ORCS" id="5189">
    <property type="hits" value="104 hits in 1162 CRISPR screens"/>
</dbReference>
<dbReference type="ChiTaRS" id="PEX1">
    <property type="organism name" value="human"/>
</dbReference>
<dbReference type="GeneWiki" id="PEX1"/>
<dbReference type="GenomeRNAi" id="5189"/>
<dbReference type="Pharos" id="O43933">
    <property type="development level" value="Tbio"/>
</dbReference>
<dbReference type="PRO" id="PR:O43933"/>
<dbReference type="Proteomes" id="UP000005640">
    <property type="component" value="Chromosome 7"/>
</dbReference>
<dbReference type="RNAct" id="O43933">
    <property type="molecule type" value="protein"/>
</dbReference>
<dbReference type="Bgee" id="ENSG00000127980">
    <property type="expression patterns" value="Expressed in calcaneal tendon and 187 other cell types or tissues"/>
</dbReference>
<dbReference type="ExpressionAtlas" id="O43933">
    <property type="expression patterns" value="baseline and differential"/>
</dbReference>
<dbReference type="GO" id="GO:0005737">
    <property type="term" value="C:cytoplasm"/>
    <property type="evidence" value="ECO:0000314"/>
    <property type="project" value="UniProtKB"/>
</dbReference>
<dbReference type="GO" id="GO:0005829">
    <property type="term" value="C:cytosol"/>
    <property type="evidence" value="ECO:0000314"/>
    <property type="project" value="UniProtKB"/>
</dbReference>
<dbReference type="GO" id="GO:0070062">
    <property type="term" value="C:extracellular exosome"/>
    <property type="evidence" value="ECO:0007005"/>
    <property type="project" value="UniProtKB"/>
</dbReference>
<dbReference type="GO" id="GO:0005778">
    <property type="term" value="C:peroxisomal membrane"/>
    <property type="evidence" value="ECO:0000314"/>
    <property type="project" value="UniProtKB"/>
</dbReference>
<dbReference type="GO" id="GO:0005777">
    <property type="term" value="C:peroxisome"/>
    <property type="evidence" value="ECO:0000314"/>
    <property type="project" value="HPA"/>
</dbReference>
<dbReference type="GO" id="GO:0005524">
    <property type="term" value="F:ATP binding"/>
    <property type="evidence" value="ECO:0000315"/>
    <property type="project" value="UniProtKB"/>
</dbReference>
<dbReference type="GO" id="GO:0016887">
    <property type="term" value="F:ATP hydrolysis activity"/>
    <property type="evidence" value="ECO:0000315"/>
    <property type="project" value="UniProtKB"/>
</dbReference>
<dbReference type="GO" id="GO:0140318">
    <property type="term" value="F:protein transporter activity"/>
    <property type="evidence" value="ECO:0000314"/>
    <property type="project" value="UniProtKB"/>
</dbReference>
<dbReference type="GO" id="GO:0044877">
    <property type="term" value="F:protein-containing complex binding"/>
    <property type="evidence" value="ECO:0000314"/>
    <property type="project" value="UniProtKB"/>
</dbReference>
<dbReference type="GO" id="GO:0140036">
    <property type="term" value="F:ubiquitin-modified protein reader activity"/>
    <property type="evidence" value="ECO:0000314"/>
    <property type="project" value="UniProtKB"/>
</dbReference>
<dbReference type="GO" id="GO:0060152">
    <property type="term" value="P:microtubule-based peroxisome localization"/>
    <property type="evidence" value="ECO:0000315"/>
    <property type="project" value="UniProtKB"/>
</dbReference>
<dbReference type="GO" id="GO:0007031">
    <property type="term" value="P:peroxisome organization"/>
    <property type="evidence" value="ECO:0000315"/>
    <property type="project" value="UniProtKB"/>
</dbReference>
<dbReference type="GO" id="GO:0016558">
    <property type="term" value="P:protein import into peroxisome matrix"/>
    <property type="evidence" value="ECO:0000315"/>
    <property type="project" value="UniProtKB"/>
</dbReference>
<dbReference type="GO" id="GO:0016562">
    <property type="term" value="P:protein import into peroxisome matrix, receptor recycling"/>
    <property type="evidence" value="ECO:0000314"/>
    <property type="project" value="UniProtKB"/>
</dbReference>
<dbReference type="GO" id="GO:0006625">
    <property type="term" value="P:protein targeting to peroxisome"/>
    <property type="evidence" value="ECO:0000315"/>
    <property type="project" value="UniProtKB"/>
</dbReference>
<dbReference type="GO" id="GO:0043335">
    <property type="term" value="P:protein unfolding"/>
    <property type="evidence" value="ECO:0000314"/>
    <property type="project" value="UniProtKB"/>
</dbReference>
<dbReference type="CDD" id="cd19526">
    <property type="entry name" value="RecA-like_PEX1_r2"/>
    <property type="match status" value="1"/>
</dbReference>
<dbReference type="FunFam" id="1.10.8.60:FF:000067">
    <property type="entry name" value="Peroxisomal biogenesis factor 1"/>
    <property type="match status" value="1"/>
</dbReference>
<dbReference type="FunFam" id="1.10.8.60:FF:000089">
    <property type="entry name" value="Peroxisomal biogenesis factor 1"/>
    <property type="match status" value="1"/>
</dbReference>
<dbReference type="FunFam" id="3.40.50.300:FF:000966">
    <property type="entry name" value="Peroxisomal biogenesis factor 1"/>
    <property type="match status" value="1"/>
</dbReference>
<dbReference type="FunFam" id="3.40.50.300:FF:001852">
    <property type="entry name" value="Peroxisomal biogenesis factor 1"/>
    <property type="match status" value="1"/>
</dbReference>
<dbReference type="FunFam" id="3.10.330.10:FF:000004">
    <property type="entry name" value="Peroxisome biogenesis factor 1"/>
    <property type="match status" value="1"/>
</dbReference>
<dbReference type="FunFam" id="2.40.40.20:FF:000016">
    <property type="entry name" value="peroxisome biogenesis factor 1"/>
    <property type="match status" value="1"/>
</dbReference>
<dbReference type="Gene3D" id="1.10.8.60">
    <property type="match status" value="2"/>
</dbReference>
<dbReference type="Gene3D" id="2.40.40.20">
    <property type="match status" value="1"/>
</dbReference>
<dbReference type="Gene3D" id="3.10.330.10">
    <property type="match status" value="1"/>
</dbReference>
<dbReference type="Gene3D" id="3.40.50.300">
    <property type="entry name" value="P-loop containing nucleotide triphosphate hydrolases"/>
    <property type="match status" value="2"/>
</dbReference>
<dbReference type="InterPro" id="IPR003593">
    <property type="entry name" value="AAA+_ATPase"/>
</dbReference>
<dbReference type="InterPro" id="IPR050168">
    <property type="entry name" value="AAA_ATPase_domain"/>
</dbReference>
<dbReference type="InterPro" id="IPR041569">
    <property type="entry name" value="AAA_lid_3"/>
</dbReference>
<dbReference type="InterPro" id="IPR009010">
    <property type="entry name" value="Asp_de-COase-like_dom_sf"/>
</dbReference>
<dbReference type="InterPro" id="IPR003959">
    <property type="entry name" value="ATPase_AAA_core"/>
</dbReference>
<dbReference type="InterPro" id="IPR003960">
    <property type="entry name" value="ATPase_AAA_CS"/>
</dbReference>
<dbReference type="InterPro" id="IPR029067">
    <property type="entry name" value="CDC48_domain_2-like_sf"/>
</dbReference>
<dbReference type="InterPro" id="IPR027417">
    <property type="entry name" value="P-loop_NTPase"/>
</dbReference>
<dbReference type="InterPro" id="IPR015343">
    <property type="entry name" value="PEX1-N-lobe"/>
</dbReference>
<dbReference type="InterPro" id="IPR015342">
    <property type="entry name" value="PEX1-N_C-lobe"/>
</dbReference>
<dbReference type="PANTHER" id="PTHR23077">
    <property type="entry name" value="AAA-FAMILY ATPASE"/>
    <property type="match status" value="1"/>
</dbReference>
<dbReference type="PANTHER" id="PTHR23077:SF12">
    <property type="entry name" value="PEROXISOMAL ATPASE PEX1"/>
    <property type="match status" value="1"/>
</dbReference>
<dbReference type="Pfam" id="PF00004">
    <property type="entry name" value="AAA"/>
    <property type="match status" value="2"/>
</dbReference>
<dbReference type="Pfam" id="PF17862">
    <property type="entry name" value="AAA_lid_3"/>
    <property type="match status" value="1"/>
</dbReference>
<dbReference type="Pfam" id="PF09262">
    <property type="entry name" value="PEX-1N"/>
    <property type="match status" value="1"/>
</dbReference>
<dbReference type="Pfam" id="PF09263">
    <property type="entry name" value="PEX-2N"/>
    <property type="match status" value="1"/>
</dbReference>
<dbReference type="SMART" id="SM00382">
    <property type="entry name" value="AAA"/>
    <property type="match status" value="2"/>
</dbReference>
<dbReference type="SUPFAM" id="SSF50692">
    <property type="entry name" value="ADC-like"/>
    <property type="match status" value="1"/>
</dbReference>
<dbReference type="SUPFAM" id="SSF54585">
    <property type="entry name" value="Cdc48 domain 2-like"/>
    <property type="match status" value="1"/>
</dbReference>
<dbReference type="SUPFAM" id="SSF52540">
    <property type="entry name" value="P-loop containing nucleoside triphosphate hydrolases"/>
    <property type="match status" value="2"/>
</dbReference>
<dbReference type="PROSITE" id="PS00674">
    <property type="entry name" value="AAA"/>
    <property type="match status" value="1"/>
</dbReference>
<comment type="function">
    <text evidence="3 7 8 10 13">Component of the PEX1-PEX6 AAA ATPase complex, a protein dislocase complex that mediates the ATP-dependent extraction of the PEX5 receptor from peroxisomal membranes, an essential step for PEX5 recycling (PubMed:11439091, PubMed:16314507, PubMed:16854980, PubMed:21362118, PubMed:29884772). Specifically recognizes PEX5 monoubiquitinated at 'Cys-11', and pulls it out of the peroxisome lumen through the PEX2-PEX10-PEX12 retrotranslocation channel (PubMed:29884772). Extraction by the PEX1-PEX6 AAA ATPase complex is accompanied by unfolding of the TPR repeats and release of bound cargo from PEX5 (PubMed:29884772).</text>
</comment>
<comment type="catalytic activity">
    <reaction evidence="8">
        <text>ATP + H2O = ADP + phosphate + H(+)</text>
        <dbReference type="Rhea" id="RHEA:13065"/>
        <dbReference type="ChEBI" id="CHEBI:15377"/>
        <dbReference type="ChEBI" id="CHEBI:15378"/>
        <dbReference type="ChEBI" id="CHEBI:30616"/>
        <dbReference type="ChEBI" id="CHEBI:43474"/>
        <dbReference type="ChEBI" id="CHEBI:456216"/>
    </reaction>
    <physiologicalReaction direction="left-to-right" evidence="8">
        <dbReference type="Rhea" id="RHEA:13066"/>
    </physiologicalReaction>
</comment>
<comment type="subunit">
    <text evidence="4 8 10">Homooligomer; homooligomerizes in the cytosol, interaction with PEX6 promotes dissociation of the homooligomer (PubMed:16854980). Interacts with PEX6; forming the PEX1-PEX6 AAA ATPase complex, which is composed of a heterohexamer formed by a trimer of PEX1-PEX6 dimers (PubMed:12717447, PubMed:16854980, PubMed:21362118). Interacts indirectly with PEX26, via its interaction with PEX6 (PubMed:12717447).</text>
</comment>
<comment type="interaction">
    <interactant intactId="EBI-988601">
        <id>O43933</id>
    </interactant>
    <interactant intactId="EBI-2130187">
        <id>Q9NYG5</id>
        <label>ANAPC11</label>
    </interactant>
    <organismsDiffer>false</organismsDiffer>
    <experiments>3</experiments>
</comment>
<comment type="interaction">
    <interactant intactId="EBI-988601">
        <id>O43933</id>
    </interactant>
    <interactant intactId="EBI-2556915">
        <id>P13928</id>
        <label>ANXA8</label>
    </interactant>
    <organismsDiffer>false</organismsDiffer>
    <experiments>3</experiments>
</comment>
<comment type="interaction">
    <interactant intactId="EBI-988601">
        <id>O43933</id>
    </interactant>
    <interactant intactId="EBI-2875816">
        <id>Q9NP61</id>
        <label>ARFGAP3</label>
    </interactant>
    <organismsDiffer>false</organismsDiffer>
    <experiments>3</experiments>
</comment>
<comment type="interaction">
    <interactant intactId="EBI-988601">
        <id>O43933</id>
    </interactant>
    <interactant intactId="EBI-749503">
        <id>Q16520</id>
        <label>BATF</label>
    </interactant>
    <organismsDiffer>false</organismsDiffer>
    <experiments>3</experiments>
</comment>
<comment type="interaction">
    <interactant intactId="EBI-988601">
        <id>O43933</id>
    </interactant>
    <interactant intactId="EBI-350590">
        <id>Q9UNS2</id>
        <label>COPS3</label>
    </interactant>
    <organismsDiffer>false</organismsDiffer>
    <experiments>3</experiments>
</comment>
<comment type="interaction">
    <interactant intactId="EBI-988601">
        <id>O43933</id>
    </interactant>
    <interactant intactId="EBI-25842815">
        <id>Q5TAQ9-2</id>
        <label>DCAF8</label>
    </interactant>
    <organismsDiffer>false</organismsDiffer>
    <experiments>3</experiments>
</comment>
<comment type="interaction">
    <interactant intactId="EBI-988601">
        <id>O43933</id>
    </interactant>
    <interactant intactId="EBI-724653">
        <id>Q9BPU6</id>
        <label>DPYSL5</label>
    </interactant>
    <organismsDiffer>false</organismsDiffer>
    <experiments>3</experiments>
</comment>
<comment type="interaction">
    <interactant intactId="EBI-988601">
        <id>O43933</id>
    </interactant>
    <interactant intactId="EBI-928530">
        <id>O60841</id>
        <label>EIF5B</label>
    </interactant>
    <organismsDiffer>false</organismsDiffer>
    <experiments>3</experiments>
</comment>
<comment type="interaction">
    <interactant intactId="EBI-988601">
        <id>O43933</id>
    </interactant>
    <interactant intactId="EBI-21574901">
        <id>Q8TE68-3</id>
        <label>EPS8L1</label>
    </interactant>
    <organismsDiffer>false</organismsDiffer>
    <experiments>3</experiments>
</comment>
<comment type="interaction">
    <interactant intactId="EBI-988601">
        <id>O43933</id>
    </interactant>
    <interactant intactId="EBI-3907241">
        <id>Q8NCL4</id>
        <label>GALNT6</label>
    </interactant>
    <organismsDiffer>false</organismsDiffer>
    <experiments>3</experiments>
</comment>
<comment type="interaction">
    <interactant intactId="EBI-988601">
        <id>O43933</id>
    </interactant>
    <interactant intactId="EBI-79722">
        <id>P68431</id>
        <label>H3C12</label>
    </interactant>
    <organismsDiffer>false</organismsDiffer>
    <experiments>3</experiments>
</comment>
<comment type="interaction">
    <interactant intactId="EBI-988601">
        <id>O43933</id>
    </interactant>
    <interactant intactId="EBI-9091197">
        <id>Q8IY31-3</id>
        <label>IFT20</label>
    </interactant>
    <organismsDiffer>false</organismsDiffer>
    <experiments>3</experiments>
</comment>
<comment type="interaction">
    <interactant intactId="EBI-988601">
        <id>O43933</id>
    </interactant>
    <interactant intactId="EBI-2866661">
        <id>Q9UNL4</id>
        <label>ING4</label>
    </interactant>
    <organismsDiffer>false</organismsDiffer>
    <experiments>3</experiments>
</comment>
<comment type="interaction">
    <interactant intactId="EBI-988601">
        <id>O43933</id>
    </interactant>
    <interactant intactId="EBI-25871195">
        <id>Q9NVX7-2</id>
        <label>KBTBD4</label>
    </interactant>
    <organismsDiffer>false</organismsDiffer>
    <experiments>3</experiments>
</comment>
<comment type="interaction">
    <interactant intactId="EBI-988601">
        <id>O43933</id>
    </interactant>
    <interactant intactId="EBI-8472267">
        <id>P57682</id>
        <label>KLF3</label>
    </interactant>
    <organismsDiffer>false</organismsDiffer>
    <experiments>3</experiments>
</comment>
<comment type="interaction">
    <interactant intactId="EBI-988601">
        <id>O43933</id>
    </interactant>
    <interactant intactId="EBI-8473062">
        <id>Q8N1A0</id>
        <label>KRT222</label>
    </interactant>
    <organismsDiffer>false</organismsDiffer>
    <experiments>3</experiments>
</comment>
<comment type="interaction">
    <interactant intactId="EBI-988601">
        <id>O43933</id>
    </interactant>
    <interactant intactId="EBI-8474075">
        <id>Q68G74</id>
        <label>LHX8</label>
    </interactant>
    <organismsDiffer>false</organismsDiffer>
    <experiments>3</experiments>
</comment>
<comment type="interaction">
    <interactant intactId="EBI-988601">
        <id>O43933</id>
    </interactant>
    <interactant intactId="EBI-10182361">
        <id>Q9NS73-5</id>
        <label>MBIP</label>
    </interactant>
    <organismsDiffer>false</organismsDiffer>
    <experiments>3</experiments>
</comment>
<comment type="interaction">
    <interactant intactId="EBI-988601">
        <id>O43933</id>
    </interactant>
    <interactant intactId="EBI-2829677">
        <id>P41218</id>
        <label>MNDA</label>
    </interactant>
    <organismsDiffer>false</organismsDiffer>
    <experiments>3</experiments>
</comment>
<comment type="interaction">
    <interactant intactId="EBI-988601">
        <id>O43933</id>
    </interactant>
    <interactant intactId="EBI-25860238">
        <id>O43196-4</id>
        <label>MSH5</label>
    </interactant>
    <organismsDiffer>false</organismsDiffer>
    <experiments>3</experiments>
</comment>
<comment type="interaction">
    <interactant intactId="EBI-988601">
        <id>O43933</id>
    </interactant>
    <interactant intactId="EBI-1390771">
        <id>Q96A32</id>
        <label>MYL11</label>
    </interactant>
    <organismsDiffer>false</organismsDiffer>
    <experiments>3</experiments>
</comment>
<comment type="interaction">
    <interactant intactId="EBI-988601">
        <id>O43933</id>
    </interactant>
    <interactant intactId="EBI-988581">
        <id>Q13608</id>
        <label>PEX6</label>
    </interactant>
    <organismsDiffer>false</organismsDiffer>
    <experiments>2</experiments>
</comment>
<comment type="interaction">
    <interactant intactId="EBI-988601">
        <id>O43933</id>
    </interactant>
    <interactant intactId="EBI-629434">
        <id>O75925</id>
        <label>PIAS1</label>
    </interactant>
    <organismsDiffer>false</organismsDiffer>
    <experiments>3</experiments>
</comment>
<comment type="interaction">
    <interactant intactId="EBI-988601">
        <id>O43933</id>
    </interactant>
    <interactant intactId="EBI-18063495">
        <id>Q8TBJ4</id>
        <label>PLPPR1</label>
    </interactant>
    <organismsDiffer>false</organismsDiffer>
    <experiments>3</experiments>
</comment>
<comment type="interaction">
    <interactant intactId="EBI-988601">
        <id>O43933</id>
    </interactant>
    <interactant intactId="EBI-746325">
        <id>Q8TCX5</id>
        <label>RHPN1</label>
    </interactant>
    <organismsDiffer>false</organismsDiffer>
    <experiments>3</experiments>
</comment>
<comment type="interaction">
    <interactant intactId="EBI-988601">
        <id>O43933</id>
    </interactant>
    <interactant intactId="EBI-752324">
        <id>Q8N488</id>
        <label>RYBP</label>
    </interactant>
    <organismsDiffer>false</organismsDiffer>
    <experiments>3</experiments>
</comment>
<comment type="interaction">
    <interactant intactId="EBI-988601">
        <id>O43933</id>
    </interactant>
    <interactant intactId="EBI-10303490">
        <id>Q9C0C4</id>
        <label>SEMA4C</label>
    </interactant>
    <organismsDiffer>false</organismsDiffer>
    <experiments>3</experiments>
</comment>
<comment type="interaction">
    <interactant intactId="EBI-988601">
        <id>O43933</id>
    </interactant>
    <interactant intactId="EBI-9089805">
        <id>Q9NTN9-3</id>
        <label>SEMA4G</label>
    </interactant>
    <organismsDiffer>false</organismsDiffer>
    <experiments>3</experiments>
</comment>
<comment type="interaction">
    <interactant intactId="EBI-988601">
        <id>O43933</id>
    </interactant>
    <interactant intactId="EBI-1045571">
        <id>Q13530</id>
        <label>SERINC3</label>
    </interactant>
    <organismsDiffer>false</organismsDiffer>
    <experiments>3</experiments>
</comment>
<comment type="interaction">
    <interactant intactId="EBI-988601">
        <id>O43933</id>
    </interactant>
    <interactant intactId="EBI-358545">
        <id>Q9GZS3</id>
        <label>SKIC8</label>
    </interactant>
    <organismsDiffer>false</organismsDiffer>
    <experiments>3</experiments>
</comment>
<comment type="interaction">
    <interactant intactId="EBI-988601">
        <id>O43933</id>
    </interactant>
    <interactant intactId="EBI-8635958">
        <id>Q6RVD6</id>
        <label>SPATA8</label>
    </interactant>
    <organismsDiffer>false</organismsDiffer>
    <experiments>3</experiments>
</comment>
<comment type="interaction">
    <interactant intactId="EBI-988601">
        <id>O43933</id>
    </interactant>
    <interactant intactId="EBI-1044428">
        <id>Q9UJZ1</id>
        <label>STOML2</label>
    </interactant>
    <organismsDiffer>false</organismsDiffer>
    <experiments>3</experiments>
</comment>
<comment type="interaction">
    <interactant intactId="EBI-988601">
        <id>O43933</id>
    </interactant>
    <interactant intactId="EBI-21575846">
        <id>Q8WUA7-2</id>
        <label>TBC1D22A</label>
    </interactant>
    <organismsDiffer>false</organismsDiffer>
    <experiments>3</experiments>
</comment>
<comment type="interaction">
    <interactant intactId="EBI-988601">
        <id>O43933</id>
    </interactant>
    <interactant intactId="EBI-2511291">
        <id>Q96EI5</id>
        <label>TCEAL4</label>
    </interactant>
    <organismsDiffer>false</organismsDiffer>
    <experiments>3</experiments>
</comment>
<comment type="interaction">
    <interactant intactId="EBI-988601">
        <id>O43933</id>
    </interactant>
    <interactant intactId="EBI-704146">
        <id>P19429</id>
        <label>TNNI3</label>
    </interactant>
    <organismsDiffer>false</organismsDiffer>
    <experiments>3</experiments>
</comment>
<comment type="interaction">
    <interactant intactId="EBI-988601">
        <id>O43933</id>
    </interactant>
    <interactant intactId="EBI-354022">
        <id>P45880</id>
        <label>VDAC2</label>
    </interactant>
    <organismsDiffer>false</organismsDiffer>
    <experiments>3</experiments>
</comment>
<comment type="interaction">
    <interactant intactId="EBI-988601">
        <id>O43933</id>
    </interactant>
    <interactant intactId="EBI-743923">
        <id>O00308</id>
        <label>WWP2</label>
    </interactant>
    <organismsDiffer>false</organismsDiffer>
    <experiments>3</experiments>
</comment>
<comment type="interaction">
    <interactant intactId="EBI-988601">
        <id>O43933</id>
    </interactant>
    <interactant intactId="EBI-11124401">
        <id>Q8TBF4</id>
        <label>ZCRB1</label>
    </interactant>
    <organismsDiffer>false</organismsDiffer>
    <experiments>3</experiments>
</comment>
<comment type="interaction">
    <interactant intactId="EBI-988601">
        <id>O43933</id>
    </interactant>
    <interactant intactId="EBI-12055755">
        <id>Q9UJW8-4</id>
        <label>ZNF180</label>
    </interactant>
    <organismsDiffer>false</organismsDiffer>
    <experiments>3</experiments>
</comment>
<comment type="interaction">
    <interactant intactId="EBI-988601">
        <id>O43933</id>
    </interactant>
    <interactant intactId="EBI-2813661">
        <id>Q8N895</id>
        <label>ZNF366</label>
    </interactant>
    <organismsDiffer>false</organismsDiffer>
    <experiments>3</experiments>
</comment>
<comment type="interaction">
    <interactant intactId="EBI-988601">
        <id>O43933</id>
    </interactant>
    <interactant intactId="EBI-10259496">
        <id>Q86V28</id>
    </interactant>
    <organismsDiffer>false</organismsDiffer>
    <experiments>3</experiments>
</comment>
<comment type="subcellular location">
    <subcellularLocation>
        <location evidence="8">Cytoplasm</location>
        <location evidence="8">Cytosol</location>
    </subcellularLocation>
    <subcellularLocation>
        <location evidence="3 4 8 10">Peroxisome membrane</location>
    </subcellularLocation>
    <text evidence="4 8">Associated with peroxisomal membranes; anchored by PEX26 to peroxisome membranes.</text>
</comment>
<comment type="alternative products">
    <event type="alternative splicing"/>
    <isoform>
        <id>O43933-1</id>
        <name>1</name>
        <sequence type="displayed"/>
    </isoform>
    <isoform>
        <id>O43933-2</id>
        <name>2</name>
        <sequence type="described" ref="VSP_057136"/>
    </isoform>
</comment>
<comment type="disease" evidence="9">
    <disease id="DI-00913">
        <name>Peroxisome biogenesis disorder complementation group 1</name>
        <acronym>PBD-CG1</acronym>
        <description>A peroxisomal disorder arising from a failure of protein import into the peroxisomal membrane or matrix. The peroxisome biogenesis disorders (PBD group) are genetically heterogeneous with at least 14 distinct genetic groups as concluded from complementation studies. Include disorders are: Zellweger syndrome (ZWS), neonatal adrenoleukodystrophy (NALD), infantile Refsum disease (IRD), and classical rhizomelic chondrodysplasia punctata (RCDP). ZWS, NALD and IRD are distinct from RCDP and constitute a clinical continuum of overlapping phenotypes known as the Zellweger spectrum (PBD-ZSS).</description>
        <dbReference type="MIM" id="214100"/>
    </disease>
    <text>The disease is caused by variants affecting the gene represented in this entry.</text>
</comment>
<comment type="disease" evidence="8 14 15 16 17 18 19">
    <disease id="DI-00800">
        <name>Peroxisome biogenesis disorder 1A</name>
        <acronym>PBD1A</acronym>
        <description>A fatal peroxisome biogenesis disorder belonging to the Zellweger disease spectrum. PBD1A is an autosomal recessive systemic disorder characterized clinically by severe neurologic dysfunction with profound psychomotor retardation, severe hypotonia and neonatal seizures, craniofacial abnormalities, liver dysfunction, and biochemically by the absence of peroxisomes. Additional features include cardiovascular and skeletal defects, renal cysts, ocular abnormalities, and hearing impairment. Most severely affected individuals with the classic form of the disease (classic Zellweger syndrome) die within the first year of life.</description>
        <dbReference type="MIM" id="214100"/>
    </disease>
    <text>The disease is caused by variants affecting the gene represented in this entry.</text>
</comment>
<comment type="disease" evidence="3 6 17 19">
    <disease id="DI-03577">
        <name>Peroxisome biogenesis disorder 1B</name>
        <acronym>PBD1B</acronym>
        <description>A peroxisome biogenesis disorder that includes neonatal adrenoleukodystrophy (NALD) and infantile Refsum disease (IRD), two milder manifestations of the Zellweger disease spectrum. The clinical course of patients with the NALD and IRD presentation is variable and may include developmental delay, hypotonia, liver dysfunction, sensorineural hearing loss, retinal dystrophy and vision impairment. Children with the NALD presentation may reach their teens, while patients with the IRD presentation may reach adulthood. The clinical conditions are often slowly progressive in particular with respect to loss of hearing and vision. The biochemical abnormalities include accumulation of phytanic acid, very long chain fatty acids (VLCFA), di- and trihydroxycholestanoic acid and pipecolic acid.</description>
        <dbReference type="MIM" id="601539"/>
    </disease>
    <text>The disease is caused by variants affecting the gene represented in this entry.</text>
</comment>
<comment type="disease" evidence="11 12">
    <disease id="DI-04563">
        <name>Heimler syndrome 1</name>
        <acronym>HMLR1</acronym>
        <description>A form of Heimler syndrome, a very mild peroxisome biogenesis disorder characterized by sensorineural hearing loss, amelogenesis imperfecta resulting in enamel hyoplasia of the secondary dentition, nail defects, and occasional or late-onset retinal pigmentation abnormalities.</description>
        <dbReference type="MIM" id="234580"/>
    </disease>
    <text>The disease is caused by variants affecting the gene represented in this entry.</text>
</comment>
<comment type="similarity">
    <text evidence="22">Belongs to the AAA ATPase family.</text>
</comment>
<comment type="sequence caution" evidence="22">
    <conflict type="erroneous gene model prediction">
        <sequence resource="EMBL-CDS" id="AAB46346"/>
    </conflict>
</comment>
<comment type="online information" name="dbPEX, PEX Gene Database">
    <link uri="https://databases.lovd.nl/shared/genes/PEX1"/>
</comment>
<protein>
    <recommendedName>
        <fullName evidence="22">Peroxisomal ATPase PEX1</fullName>
        <ecNumber evidence="8">3.6.4.-</ecNumber>
    </recommendedName>
    <alternativeName>
        <fullName evidence="22">Peroxin-1</fullName>
    </alternativeName>
    <alternativeName>
        <fullName>Peroxisome biogenesis disorder protein 1</fullName>
    </alternativeName>
    <alternativeName>
        <fullName evidence="22">Peroxisome biogenesis factor 1</fullName>
    </alternativeName>
</protein>
<feature type="chain" id="PRO_0000084604" description="Peroxisomal ATPase PEX1">
    <location>
        <begin position="1"/>
        <end position="1283"/>
    </location>
</feature>
<feature type="region of interest" description="Disordered" evidence="2">
    <location>
        <begin position="346"/>
        <end position="367"/>
    </location>
</feature>
<feature type="region of interest" description="Disordered" evidence="2">
    <location>
        <begin position="1260"/>
        <end position="1283"/>
    </location>
</feature>
<feature type="compositionally biased region" description="Basic and acidic residues" evidence="2">
    <location>
        <begin position="355"/>
        <end position="367"/>
    </location>
</feature>
<feature type="binding site" evidence="1">
    <location>
        <begin position="599"/>
        <end position="606"/>
    </location>
    <ligand>
        <name>ATP</name>
        <dbReference type="ChEBI" id="CHEBI:30616"/>
    </ligand>
</feature>
<feature type="binding site" evidence="1">
    <location>
        <begin position="881"/>
        <end position="888"/>
    </location>
    <ligand>
        <name>ATP</name>
        <dbReference type="ChEBI" id="CHEBI:30616"/>
    </ligand>
</feature>
<feature type="modified residue" description="Phosphoserine" evidence="25">
    <location>
        <position position="354"/>
    </location>
</feature>
<feature type="modified residue" description="Phosphoserine" evidence="25">
    <location>
        <position position="1181"/>
    </location>
</feature>
<feature type="modified residue" description="Phosphoserine" evidence="24">
    <location>
        <position position="1209"/>
    </location>
</feature>
<feature type="modified residue" description="Phosphoserine" evidence="25">
    <location>
        <position position="1211"/>
    </location>
</feature>
<feature type="splice variant" id="VSP_057136" description="In isoform 2." evidence="20">
    <location>
        <begin position="92"/>
        <end position="413"/>
    </location>
</feature>
<feature type="sequence variant" id="VAR_074108" description="In HMLR1; results in mild functional decrease in peroxisome biogenesis; dbSNP:rs370483961." evidence="11">
    <original>R</original>
    <variation>P</variation>
    <location>
        <position position="581"/>
    </location>
</feature>
<feature type="sequence variant" id="VAR_058376" description="In PBD-CG1." evidence="9">
    <original>L</original>
    <variation>R</variation>
    <location>
        <position position="590"/>
    </location>
</feature>
<feature type="sequence variant" id="VAR_058377" description="In PBD-CG1; dbSNP:rs61750407." evidence="9">
    <original>G</original>
    <variation>R</variation>
    <location>
        <position position="593"/>
    </location>
</feature>
<feature type="sequence variant" id="VAR_087133" description="In PBD1A." evidence="14">
    <original>L</original>
    <variation>P</variation>
    <location>
        <position position="597"/>
    </location>
</feature>
<feature type="sequence variant" id="VAR_014358" description="In PBD1A and PBD1B." evidence="19">
    <location>
        <begin position="634"/>
        <end position="690"/>
    </location>
</feature>
<feature type="sequence variant" id="VAR_048113" description="In dbSNP:rs4559173.">
    <original>I</original>
    <variation>R</variation>
    <location>
        <position position="640"/>
    </location>
</feature>
<feature type="sequence variant" id="VAR_008876" description="In PBD1A and PBD1B; decreased binding to PEX6; impaired protein import into peroxisomes; dbSNP:rs121434455." evidence="8 19">
    <original>L</original>
    <variation>P</variation>
    <location>
        <position position="664"/>
    </location>
</feature>
<feature type="sequence variant" id="VAR_087134" description="In PBD1A." evidence="15">
    <location>
        <begin position="684"/>
        <end position="1283"/>
    </location>
</feature>
<feature type="sequence variant" id="VAR_034376" description="In dbSNP:rs35996821." evidence="5 9">
    <original>I</original>
    <variation>M</variation>
    <location>
        <position position="696"/>
    </location>
</feature>
<feature type="sequence variant" id="VAR_074109" description="In HMLR1; results in mild functional decrease in peroxisome biogenesis; dbSNP:rs863225084." evidence="11">
    <original>L</original>
    <variation>W</variation>
    <location>
        <position position="705"/>
    </location>
</feature>
<feature type="sequence variant" id="VAR_058378" description="In PBD-CG1; dbSNP:rs61750419." evidence="9">
    <original>R</original>
    <variation>G</variation>
    <location>
        <position position="798"/>
    </location>
</feature>
<feature type="sequence variant" id="VAR_008877" description="In PBD1A, PBD1B and PBD-CG1; dbSNP:rs61750420." evidence="3 9 17 18 19">
    <original>G</original>
    <variation>D</variation>
    <location>
        <position position="843"/>
    </location>
</feature>
<feature type="sequence variant" id="VAR_058379" description="In dbSNP:rs535271603." evidence="9">
    <original>R</original>
    <variation>Q</variation>
    <location>
        <position position="948"/>
    </location>
</feature>
<feature type="sequence variant" id="VAR_087135" description="In PBD1A; impaired protein import into peroxisomes; dbSNP:rs866184460." evidence="16">
    <original>R</original>
    <variation>W</variation>
    <location>
        <position position="949"/>
    </location>
</feature>
<feature type="sequence variant" id="VAR_087136" description="In PBD1A; impaired protein import into peroxisomes." evidence="16">
    <original>G</original>
    <variation>A</variation>
    <location>
        <position position="970"/>
    </location>
</feature>
<feature type="sequence variant" id="VAR_077503" description="In PBD1B and HMLR1; dbSNP:rs61750427." evidence="6 12">
    <original>I</original>
    <variation>T</variation>
    <location>
        <position position="989"/>
    </location>
</feature>
<feature type="sequence variant" id="VAR_077504" description="In PBD1B; dbSNP:rs61750429." evidence="6">
    <original>R</original>
    <variation>Q</variation>
    <location>
        <position position="998"/>
    </location>
</feature>
<feature type="sequence variant" id="VAR_075871" description="In PBD-CG1; dbSNP:rs62653599." evidence="9">
    <location>
        <position position="1008"/>
    </location>
</feature>
<feature type="sequence variant" id="VAR_058380" description="In PBD-CG1; dbSNP:rs1473858573." evidence="9">
    <original>A</original>
    <variation>E</variation>
    <location>
        <position position="1237"/>
    </location>
</feature>
<feature type="mutagenesis site" description="In A1 mutant; abolished ATP-binding; decreased interaction with PEX6; decreased localization to peroxisomal membranes." evidence="8 10">
    <original>K</original>
    <variation>E</variation>
    <location>
        <position position="605"/>
    </location>
</feature>
<feature type="mutagenesis site" description="In B1 mutant; abolished ATP hydrolysis; decreased interaction with PEX6; decreased localization to peroxisomal membranes." evidence="8 10">
    <original>D</original>
    <variation>N</variation>
    <location>
        <position position="662"/>
    </location>
</feature>
<feature type="mutagenesis site" description="In A2 mutant; abolished ATP-binding; decreased interaction with PEX6; decreased localization to peroxisomal membranes." evidence="8 10">
    <original>K</original>
    <variation>E</variation>
    <location>
        <position position="887"/>
    </location>
</feature>
<feature type="mutagenesis site" description="In B2 mutant; abolished ATP hydrolysis; does not affect interaction with PEX6; does not affect localization to peroxisomal membranes." evidence="8 10">
    <original>D</original>
    <variation>N</variation>
    <location>
        <position position="940"/>
    </location>
</feature>
<feature type="sequence conflict" description="In Ref. 5; BAG58539." ref="5">
    <original>Q</original>
    <variation>R</variation>
    <location>
        <position position="79"/>
    </location>
</feature>
<feature type="sequence conflict" description="In Ref. 5; BAG58539." ref="5">
    <original>E</original>
    <variation>G</variation>
    <location>
        <position position="897"/>
    </location>
</feature>
<name>PEX1_HUMAN</name>
<gene>
    <name evidence="21 23" type="primary">PEX1</name>
</gene>
<sequence length="1283" mass="142867">MWGSDRLAGAGGGGAAVTVAFTNARDCFLHLPRRLVAQLHLLQNQAIEVVWSHQPAFLSWVEGRHFSDQGENVAEINRQVGQKLGLSNGGQVFLKPCSHVVSCQQVEVEPLSADDWEILELHAVSLEQHLLDQIRIVFPKAIFPVWVDQQTYIFIQIVALIPAASYGRLETDTKLLIQPKTRRAKENTFSKADAEYKKLHSYGRDQKGMMKELQTKQLQSNTVGITESNENESEIPVDSSSVASLWTMIGSIFSFQSEKKQETSWGLTEINAFKNMQSKVVPLDNIFRVCKSQPPSIYNASATSVFHKHCAIHVFPWDQEYFDVEPSFTVTYGKLVKLLSPKQQQSKTKQNVLSPEKEKQMSEPLDQKKIRSDHNEEDEKACVLQVVWNGLEELNNAIKYTKNVEVLHLGKVWIPDDLRKRLNIEMHAVVRITPVEVTPKIPRSLKLQPRENLPKDISEEDIKTVFYSWLQQSTTTMLPLVISEEEFIKLETKDGLKEFSLSIVHSWEKEKDKNIFLLSPNLLQKTTIQVLLDPMVKEENSEEIDFILPFLKLSSLGGVNSLGVSSLEHITHSLLGRPLSRQLMSLVAGLRNGALLLTGGKGSGKSTLAKAICKEAFDKLDAHVERVDCKALRGKRLENIQKTLEVAFSEAVWMQPSVVLLDDLDLIAGLPAVPEHEHSPDAVQSQRLAHALNDMIKEFISMGSLVALIATSQSQQSLHPLLVSAQGVHIFQCVQHIQPPNQEQRCEILCNVIKNKLDCDINKFTDLDLQHVAKETGGFVARDFTVLVDRAIHSRLSRQSISTREKLVLTTLDFQKALRGFLPASLRSVNLHKPRDLGWDKIGGLHEVRQILMDTIQLPAKYPELFANLPIRQRTGILLYGPPGTGKTLLAGVIARESRMNFISVKGPELLSKYIGASEQAVRDIFIRAQAAKPCILFFDEFESIAPRRGHDNTGVTDRVVNQLLTQLDGVEGLQGVYVLAATSRPDLIDPALLRPGRLDKCVYCPPPDQVSRLEILNVLSDSLPLADDVDLQHVASVTDSFTGADLKALLYNAQLEALHGMLLSSGLQDGSSSSDSDLSLSSMVFLNHSSGSDDSAGDGECGLDQSLVSLEMSEILPDESKFNMYRLYFGSSYESELGNGTSSDLSSQCLSAPSSMTQDLPGVPGKDQLFSQPPVLRTASQEGCQELTQEQRDQLRADISIIKGRYRSQSGEDESMNQPGPIKTRLAISQSHLMTALGHTRPSISEDDWKNFAELYESFQNPKRRKNQSGTMFRPGQKVTLA</sequence>
<reference key="1">
    <citation type="journal article" date="1997" name="Nat. Genet.">
        <title>Human PEX1 is mutated in complementation group 1 of the peroxisome biogenesis disorders.</title>
        <authorList>
            <person name="Portsteffen H."/>
            <person name="Beyer A."/>
            <person name="Becker E."/>
            <person name="Epplen C."/>
            <person name="Pawlak A."/>
            <person name="Kunau W.-H."/>
            <person name="Dodt G."/>
        </authorList>
    </citation>
    <scope>NUCLEOTIDE SEQUENCE [MRNA] (ISOFORM 1)</scope>
    <scope>VARIANT PBD1A/PBD1B ASP-843</scope>
</reference>
<reference key="2">
    <citation type="journal article" date="1997" name="Nat. Genet.">
        <title>Mutations in PEX1 are the most common cause of peroxisome biogenesis disorders.</title>
        <authorList>
            <person name="Reuber B.E."/>
            <person name="Germain-Lee E."/>
            <person name="Collins C.S."/>
            <person name="Morrell J.C."/>
            <person name="Ameritunga R."/>
            <person name="Moser H.W."/>
            <person name="Valle D."/>
            <person name="Gould S.J."/>
        </authorList>
    </citation>
    <scope>NUCLEOTIDE SEQUENCE [GENOMIC DNA / MRNA] (ISOFORM 1)</scope>
    <scope>VARIANT PBD1A ASP-843</scope>
    <scope>VARIANT PBD1B ASP-843</scope>
</reference>
<reference key="3">
    <citation type="journal article" date="1998" name="Proc. Natl. Acad. Sci. U.S.A.">
        <title>Human PEX1 cloned by functional complementation on a CHO cell mutant is responsible for peroxisome-deficient Zellweger syndrome of complementation group I.</title>
        <authorList>
            <person name="Tamura S."/>
            <person name="Okumoto K."/>
            <person name="Toyama R."/>
            <person name="Shimozawa N."/>
            <person name="Tsukamoto T."/>
            <person name="Suzuki Y."/>
            <person name="Osumi T."/>
            <person name="Kondo N."/>
            <person name="Fujiki Y."/>
        </authorList>
    </citation>
    <scope>NUCLEOTIDE SEQUENCE [MRNA] (ISOFORM 1)</scope>
    <scope>VARIANTS PBD1A 634-GLY--HIS-690 DEL; PRO-664 AND ASP-843</scope>
    <scope>VARIANTS PBD1B 634-GLY--HIS-690 DEL; PRO-664 AND ASP-843</scope>
</reference>
<reference key="4">
    <citation type="journal article" date="2001" name="Biochem. J.">
        <title>Phenotype-genotype relationships in peroxisome biogenesis disorders of PEX1-defective complementation group 1 are defined by Pex1p-Pex6p interaction.</title>
        <authorList>
            <person name="Tamura S."/>
            <person name="Matsumoto N."/>
            <person name="Imamura A."/>
            <person name="Shimozawa N."/>
            <person name="Suzuki Y."/>
            <person name="Kondo N."/>
            <person name="Fujiki Y."/>
        </authorList>
    </citation>
    <scope>NUCLEOTIDE SEQUENCE [MRNA] (ISOFORM 1)</scope>
    <scope>FUNCTION</scope>
    <scope>SUBCELLULAR LOCATION</scope>
    <scope>VARIANT PBD1B ASP-843</scope>
</reference>
<reference key="5">
    <citation type="journal article" date="2004" name="Nat. Genet.">
        <title>Complete sequencing and characterization of 21,243 full-length human cDNAs.</title>
        <authorList>
            <person name="Ota T."/>
            <person name="Suzuki Y."/>
            <person name="Nishikawa T."/>
            <person name="Otsuki T."/>
            <person name="Sugiyama T."/>
            <person name="Irie R."/>
            <person name="Wakamatsu A."/>
            <person name="Hayashi K."/>
            <person name="Sato H."/>
            <person name="Nagai K."/>
            <person name="Kimura K."/>
            <person name="Makita H."/>
            <person name="Sekine M."/>
            <person name="Obayashi M."/>
            <person name="Nishi T."/>
            <person name="Shibahara T."/>
            <person name="Tanaka T."/>
            <person name="Ishii S."/>
            <person name="Yamamoto J."/>
            <person name="Saito K."/>
            <person name="Kawai Y."/>
            <person name="Isono Y."/>
            <person name="Nakamura Y."/>
            <person name="Nagahari K."/>
            <person name="Murakami K."/>
            <person name="Yasuda T."/>
            <person name="Iwayanagi T."/>
            <person name="Wagatsuma M."/>
            <person name="Shiratori A."/>
            <person name="Sudo H."/>
            <person name="Hosoiri T."/>
            <person name="Kaku Y."/>
            <person name="Kodaira H."/>
            <person name="Kondo H."/>
            <person name="Sugawara M."/>
            <person name="Takahashi M."/>
            <person name="Kanda K."/>
            <person name="Yokoi T."/>
            <person name="Furuya T."/>
            <person name="Kikkawa E."/>
            <person name="Omura Y."/>
            <person name="Abe K."/>
            <person name="Kamihara K."/>
            <person name="Katsuta N."/>
            <person name="Sato K."/>
            <person name="Tanikawa M."/>
            <person name="Yamazaki M."/>
            <person name="Ninomiya K."/>
            <person name="Ishibashi T."/>
            <person name="Yamashita H."/>
            <person name="Murakawa K."/>
            <person name="Fujimori K."/>
            <person name="Tanai H."/>
            <person name="Kimata M."/>
            <person name="Watanabe M."/>
            <person name="Hiraoka S."/>
            <person name="Chiba Y."/>
            <person name="Ishida S."/>
            <person name="Ono Y."/>
            <person name="Takiguchi S."/>
            <person name="Watanabe S."/>
            <person name="Yosida M."/>
            <person name="Hotuta T."/>
            <person name="Kusano J."/>
            <person name="Kanehori K."/>
            <person name="Takahashi-Fujii A."/>
            <person name="Hara H."/>
            <person name="Tanase T.-O."/>
            <person name="Nomura Y."/>
            <person name="Togiya S."/>
            <person name="Komai F."/>
            <person name="Hara R."/>
            <person name="Takeuchi K."/>
            <person name="Arita M."/>
            <person name="Imose N."/>
            <person name="Musashino K."/>
            <person name="Yuuki H."/>
            <person name="Oshima A."/>
            <person name="Sasaki N."/>
            <person name="Aotsuka S."/>
            <person name="Yoshikawa Y."/>
            <person name="Matsunawa H."/>
            <person name="Ichihara T."/>
            <person name="Shiohata N."/>
            <person name="Sano S."/>
            <person name="Moriya S."/>
            <person name="Momiyama H."/>
            <person name="Satoh N."/>
            <person name="Takami S."/>
            <person name="Terashima Y."/>
            <person name="Suzuki O."/>
            <person name="Nakagawa S."/>
            <person name="Senoh A."/>
            <person name="Mizoguchi H."/>
            <person name="Goto Y."/>
            <person name="Shimizu F."/>
            <person name="Wakebe H."/>
            <person name="Hishigaki H."/>
            <person name="Watanabe T."/>
            <person name="Sugiyama A."/>
            <person name="Takemoto M."/>
            <person name="Kawakami B."/>
            <person name="Yamazaki M."/>
            <person name="Watanabe K."/>
            <person name="Kumagai A."/>
            <person name="Itakura S."/>
            <person name="Fukuzumi Y."/>
            <person name="Fujimori Y."/>
            <person name="Komiyama M."/>
            <person name="Tashiro H."/>
            <person name="Tanigami A."/>
            <person name="Fujiwara T."/>
            <person name="Ono T."/>
            <person name="Yamada K."/>
            <person name="Fujii Y."/>
            <person name="Ozaki K."/>
            <person name="Hirao M."/>
            <person name="Ohmori Y."/>
            <person name="Kawabata A."/>
            <person name="Hikiji T."/>
            <person name="Kobatake N."/>
            <person name="Inagaki H."/>
            <person name="Ikema Y."/>
            <person name="Okamoto S."/>
            <person name="Okitani R."/>
            <person name="Kawakami T."/>
            <person name="Noguchi S."/>
            <person name="Itoh T."/>
            <person name="Shigeta K."/>
            <person name="Senba T."/>
            <person name="Matsumura K."/>
            <person name="Nakajima Y."/>
            <person name="Mizuno T."/>
            <person name="Morinaga M."/>
            <person name="Sasaki M."/>
            <person name="Togashi T."/>
            <person name="Oyama M."/>
            <person name="Hata H."/>
            <person name="Watanabe M."/>
            <person name="Komatsu T."/>
            <person name="Mizushima-Sugano J."/>
            <person name="Satoh T."/>
            <person name="Shirai Y."/>
            <person name="Takahashi Y."/>
            <person name="Nakagawa K."/>
            <person name="Okumura K."/>
            <person name="Nagase T."/>
            <person name="Nomura N."/>
            <person name="Kikuchi H."/>
            <person name="Masuho Y."/>
            <person name="Yamashita R."/>
            <person name="Nakai K."/>
            <person name="Yada T."/>
            <person name="Nakamura Y."/>
            <person name="Ohara O."/>
            <person name="Isogai T."/>
            <person name="Sugano S."/>
        </authorList>
    </citation>
    <scope>NUCLEOTIDE SEQUENCE [LARGE SCALE MRNA] (ISOFORMS 1 AND 2)</scope>
    <scope>VARIANT MET-696</scope>
    <source>
        <tissue>Hippocampus</tissue>
        <tissue>Trachea</tissue>
    </source>
</reference>
<reference key="6">
    <citation type="journal article" date="2003" name="Science">
        <title>Human chromosome 7: DNA sequence and biology.</title>
        <authorList>
            <person name="Scherer S.W."/>
            <person name="Cheung J."/>
            <person name="MacDonald J.R."/>
            <person name="Osborne L.R."/>
            <person name="Nakabayashi K."/>
            <person name="Herbrick J.-A."/>
            <person name="Carson A.R."/>
            <person name="Parker-Katiraee L."/>
            <person name="Skaug J."/>
            <person name="Khaja R."/>
            <person name="Zhang J."/>
            <person name="Hudek A.K."/>
            <person name="Li M."/>
            <person name="Haddad M."/>
            <person name="Duggan G.E."/>
            <person name="Fernandez B.A."/>
            <person name="Kanematsu E."/>
            <person name="Gentles S."/>
            <person name="Christopoulos C.C."/>
            <person name="Choufani S."/>
            <person name="Kwasnicka D."/>
            <person name="Zheng X.H."/>
            <person name="Lai Z."/>
            <person name="Nusskern D.R."/>
            <person name="Zhang Q."/>
            <person name="Gu Z."/>
            <person name="Lu F."/>
            <person name="Zeesman S."/>
            <person name="Nowaczyk M.J."/>
            <person name="Teshima I."/>
            <person name="Chitayat D."/>
            <person name="Shuman C."/>
            <person name="Weksberg R."/>
            <person name="Zackai E.H."/>
            <person name="Grebe T.A."/>
            <person name="Cox S.R."/>
            <person name="Kirkpatrick S.J."/>
            <person name="Rahman N."/>
            <person name="Friedman J.M."/>
            <person name="Heng H.H.Q."/>
            <person name="Pelicci P.G."/>
            <person name="Lo-Coco F."/>
            <person name="Belloni E."/>
            <person name="Shaffer L.G."/>
            <person name="Pober B."/>
            <person name="Morton C.C."/>
            <person name="Gusella J.F."/>
            <person name="Bruns G.A.P."/>
            <person name="Korf B.R."/>
            <person name="Quade B.J."/>
            <person name="Ligon A.H."/>
            <person name="Ferguson H."/>
            <person name="Higgins A.W."/>
            <person name="Leach N.T."/>
            <person name="Herrick S.R."/>
            <person name="Lemyre E."/>
            <person name="Farra C.G."/>
            <person name="Kim H.-G."/>
            <person name="Summers A.M."/>
            <person name="Gripp K.W."/>
            <person name="Roberts W."/>
            <person name="Szatmari P."/>
            <person name="Winsor E.J.T."/>
            <person name="Grzeschik K.-H."/>
            <person name="Teebi A."/>
            <person name="Minassian B.A."/>
            <person name="Kere J."/>
            <person name="Armengol L."/>
            <person name="Pujana M.A."/>
            <person name="Estivill X."/>
            <person name="Wilson M.D."/>
            <person name="Koop B.F."/>
            <person name="Tosi S."/>
            <person name="Moore G.E."/>
            <person name="Boright A.P."/>
            <person name="Zlotorynski E."/>
            <person name="Kerem B."/>
            <person name="Kroisel P.M."/>
            <person name="Petek E."/>
            <person name="Oscier D.G."/>
            <person name="Mould S.J."/>
            <person name="Doehner H."/>
            <person name="Doehner K."/>
            <person name="Rommens J.M."/>
            <person name="Vincent J.B."/>
            <person name="Venter J.C."/>
            <person name="Li P.W."/>
            <person name="Mural R.J."/>
            <person name="Adams M.D."/>
            <person name="Tsui L.-C."/>
        </authorList>
    </citation>
    <scope>NUCLEOTIDE SEQUENCE [LARGE SCALE GENOMIC DNA]</scope>
</reference>
<reference key="7">
    <citation type="submission" date="2005-09" db="EMBL/GenBank/DDBJ databases">
        <authorList>
            <person name="Mural R.J."/>
            <person name="Istrail S."/>
            <person name="Sutton G.G."/>
            <person name="Florea L."/>
            <person name="Halpern A.L."/>
            <person name="Mobarry C.M."/>
            <person name="Lippert R."/>
            <person name="Walenz B."/>
            <person name="Shatkay H."/>
            <person name="Dew I."/>
            <person name="Miller J.R."/>
            <person name="Flanigan M.J."/>
            <person name="Edwards N.J."/>
            <person name="Bolanos R."/>
            <person name="Fasulo D."/>
            <person name="Halldorsson B.V."/>
            <person name="Hannenhalli S."/>
            <person name="Turner R."/>
            <person name="Yooseph S."/>
            <person name="Lu F."/>
            <person name="Nusskern D.R."/>
            <person name="Shue B.C."/>
            <person name="Zheng X.H."/>
            <person name="Zhong F."/>
            <person name="Delcher A.L."/>
            <person name="Huson D.H."/>
            <person name="Kravitz S.A."/>
            <person name="Mouchard L."/>
            <person name="Reinert K."/>
            <person name="Remington K.A."/>
            <person name="Clark A.G."/>
            <person name="Waterman M.S."/>
            <person name="Eichler E.E."/>
            <person name="Adams M.D."/>
            <person name="Hunkapiller M.W."/>
            <person name="Myers E.W."/>
            <person name="Venter J.C."/>
        </authorList>
    </citation>
    <scope>NUCLEOTIDE SEQUENCE [LARGE SCALE GENOMIC DNA]</scope>
</reference>
<reference key="8">
    <citation type="journal article" date="2003" name="Nature">
        <title>The DNA sequence of human chromosome 7.</title>
        <authorList>
            <person name="Hillier L.W."/>
            <person name="Fulton R.S."/>
            <person name="Fulton L.A."/>
            <person name="Graves T.A."/>
            <person name="Pepin K.H."/>
            <person name="Wagner-McPherson C."/>
            <person name="Layman D."/>
            <person name="Maas J."/>
            <person name="Jaeger S."/>
            <person name="Walker R."/>
            <person name="Wylie K."/>
            <person name="Sekhon M."/>
            <person name="Becker M.C."/>
            <person name="O'Laughlin M.D."/>
            <person name="Schaller M.E."/>
            <person name="Fewell G.A."/>
            <person name="Delehaunty K.D."/>
            <person name="Miner T.L."/>
            <person name="Nash W.E."/>
            <person name="Cordes M."/>
            <person name="Du H."/>
            <person name="Sun H."/>
            <person name="Edwards J."/>
            <person name="Bradshaw-Cordum H."/>
            <person name="Ali J."/>
            <person name="Andrews S."/>
            <person name="Isak A."/>
            <person name="Vanbrunt A."/>
            <person name="Nguyen C."/>
            <person name="Du F."/>
            <person name="Lamar B."/>
            <person name="Courtney L."/>
            <person name="Kalicki J."/>
            <person name="Ozersky P."/>
            <person name="Bielicki L."/>
            <person name="Scott K."/>
            <person name="Holmes A."/>
            <person name="Harkins R."/>
            <person name="Harris A."/>
            <person name="Strong C.M."/>
            <person name="Hou S."/>
            <person name="Tomlinson C."/>
            <person name="Dauphin-Kohlberg S."/>
            <person name="Kozlowicz-Reilly A."/>
            <person name="Leonard S."/>
            <person name="Rohlfing T."/>
            <person name="Rock S.M."/>
            <person name="Tin-Wollam A.-M."/>
            <person name="Abbott A."/>
            <person name="Minx P."/>
            <person name="Maupin R."/>
            <person name="Strowmatt C."/>
            <person name="Latreille P."/>
            <person name="Miller N."/>
            <person name="Johnson D."/>
            <person name="Murray J."/>
            <person name="Woessner J.P."/>
            <person name="Wendl M.C."/>
            <person name="Yang S.-P."/>
            <person name="Schultz B.R."/>
            <person name="Wallis J.W."/>
            <person name="Spieth J."/>
            <person name="Bieri T.A."/>
            <person name="Nelson J.O."/>
            <person name="Berkowicz N."/>
            <person name="Wohldmann P.E."/>
            <person name="Cook L.L."/>
            <person name="Hickenbotham M.T."/>
            <person name="Eldred J."/>
            <person name="Williams D."/>
            <person name="Bedell J.A."/>
            <person name="Mardis E.R."/>
            <person name="Clifton S.W."/>
            <person name="Chissoe S.L."/>
            <person name="Marra M.A."/>
            <person name="Raymond C."/>
            <person name="Haugen E."/>
            <person name="Gillett W."/>
            <person name="Zhou Y."/>
            <person name="James R."/>
            <person name="Phelps K."/>
            <person name="Iadanoto S."/>
            <person name="Bubb K."/>
            <person name="Simms E."/>
            <person name="Levy R."/>
            <person name="Clendenning J."/>
            <person name="Kaul R."/>
            <person name="Kent W.J."/>
            <person name="Furey T.S."/>
            <person name="Baertsch R.A."/>
            <person name="Brent M.R."/>
            <person name="Keibler E."/>
            <person name="Flicek P."/>
            <person name="Bork P."/>
            <person name="Suyama M."/>
            <person name="Bailey J.A."/>
            <person name="Portnoy M.E."/>
            <person name="Torrents D."/>
            <person name="Chinwalla A.T."/>
            <person name="Gish W.R."/>
            <person name="Eddy S.R."/>
            <person name="McPherson J.D."/>
            <person name="Olson M.V."/>
            <person name="Eichler E.E."/>
            <person name="Green E.D."/>
            <person name="Waterston R.H."/>
            <person name="Wilson R.K."/>
        </authorList>
    </citation>
    <scope>NUCLEOTIDE SEQUENCE [LARGE SCALE GENOMIC DNA]</scope>
</reference>
<reference key="9">
    <citation type="journal article" date="2004" name="Genome Res.">
        <title>The status, quality, and expansion of the NIH full-length cDNA project: the Mammalian Gene Collection (MGC).</title>
        <authorList>
            <consortium name="The MGC Project Team"/>
        </authorList>
    </citation>
    <scope>NUCLEOTIDE SEQUENCE [LARGE SCALE MRNA] (ISOFORM 1)</scope>
    <source>
        <tissue>Lymph</tissue>
    </source>
</reference>
<reference key="10">
    <citation type="journal article" date="2003" name="Nat. Cell Biol.">
        <title>The pathogenic peroxin Pex26p recruits the Pex1p-Pex6p AAA ATPase complexes to peroxisomes.</title>
        <authorList>
            <person name="Matsumoto N."/>
            <person name="Tamura S."/>
            <person name="Fujiki Y."/>
        </authorList>
    </citation>
    <scope>SUBCELLULAR LOCATION</scope>
    <scope>INTERACTION WITH PEX26 AND PEX6</scope>
</reference>
<reference key="11">
    <citation type="journal article" date="2005" name="Mol. Cell. Biol.">
        <title>Shuttling mechanism of peroxisome targeting signal type 1 receptor Pex5: ATP-independent import and ATP-dependent export.</title>
        <authorList>
            <person name="Miyata N."/>
            <person name="Fujiki Y."/>
        </authorList>
    </citation>
    <scope>FUNCTION</scope>
</reference>
<reference key="12">
    <citation type="journal article" date="2006" name="J. Biol. Chem.">
        <title>Dynamic and functional assembly of the AAA peroxins, Pex1p and Pex6p, and their membrane receptor Pex26p.</title>
        <authorList>
            <person name="Tamura S."/>
            <person name="Yasutake S."/>
            <person name="Matsumoto N."/>
            <person name="Fujiki Y."/>
        </authorList>
    </citation>
    <scope>FUNCTION</scope>
    <scope>CATALYTIC ACTIVITY</scope>
    <scope>SUBCELLULAR LOCATION</scope>
    <scope>INTERACTION WITH PEX6</scope>
    <scope>MUTAGENESIS OF LYS-605; ASP-662; LYS-887 AND ASP-940</scope>
    <scope>CHARACTERIZATION OF VARIANT PBD1A PRO-664</scope>
</reference>
<reference key="13">
    <citation type="journal article" date="2011" name="Traffic">
        <title>Recruiting mechanism of the AAA peroxins, Pex1p and Pex6p, to Pex26p on the peroxisomal membrane.</title>
        <authorList>
            <person name="Nashiro C."/>
            <person name="Kashiwagi A."/>
            <person name="Matsuzaki T."/>
            <person name="Tamura S."/>
            <person name="Fujiki Y."/>
        </authorList>
    </citation>
    <scope>FUNCTION</scope>
    <scope>SUBCELLULAR LOCATION</scope>
    <scope>INTERACTION WITH PEX6</scope>
    <scope>MUTAGENESIS OF LYS-605; ASP-662; LYS-887 AND ASP-940</scope>
</reference>
<reference key="14">
    <citation type="journal article" date="2008" name="Proc. Natl. Acad. Sci. U.S.A.">
        <title>A quantitative atlas of mitotic phosphorylation.</title>
        <authorList>
            <person name="Dephoure N."/>
            <person name="Zhou C."/>
            <person name="Villen J."/>
            <person name="Beausoleil S.A."/>
            <person name="Bakalarski C.E."/>
            <person name="Elledge S.J."/>
            <person name="Gygi S.P."/>
        </authorList>
    </citation>
    <scope>IDENTIFICATION BY MASS SPECTROMETRY [LARGE SCALE ANALYSIS]</scope>
    <source>
        <tissue>Cervix carcinoma</tissue>
    </source>
</reference>
<reference key="15">
    <citation type="journal article" date="2009" name="Anal. Chem.">
        <title>Lys-N and trypsin cover complementary parts of the phosphoproteome in a refined SCX-based approach.</title>
        <authorList>
            <person name="Gauci S."/>
            <person name="Helbig A.O."/>
            <person name="Slijper M."/>
            <person name="Krijgsveld J."/>
            <person name="Heck A.J."/>
            <person name="Mohammed S."/>
        </authorList>
    </citation>
    <scope>IDENTIFICATION BY MASS SPECTROMETRY [LARGE SCALE ANALYSIS]</scope>
</reference>
<reference key="16">
    <citation type="journal article" date="2009" name="Hum. Mutat.">
        <title>Identification of novel mutations and sequence variation in the Zellweger syndrome spectrum of peroxisome biogenesis disorders.</title>
        <authorList>
            <person name="Yik W.Y."/>
            <person name="Steinberg S.J."/>
            <person name="Moser A.B."/>
            <person name="Moser H.W."/>
            <person name="Hacia J.G."/>
        </authorList>
    </citation>
    <scope>INVOLVEMENT IN PBD-CG1</scope>
    <scope>VARIANTS PBD-CG1 ARG-590; ARG-593; GLY-798; ASP-843; PRO-1008 DEL AND GLU-1237</scope>
    <scope>VARIANTS MET-696 AND GLN-948</scope>
</reference>
<reference key="17">
    <citation type="journal article" date="2009" name="Sci. Signal.">
        <title>Quantitative phosphoproteomic analysis of T cell receptor signaling reveals system-wide modulation of protein-protein interactions.</title>
        <authorList>
            <person name="Mayya V."/>
            <person name="Lundgren D.H."/>
            <person name="Hwang S.-I."/>
            <person name="Rezaul K."/>
            <person name="Wu L."/>
            <person name="Eng J.K."/>
            <person name="Rodionov V."/>
            <person name="Han D.K."/>
        </authorList>
    </citation>
    <scope>IDENTIFICATION BY MASS SPECTROMETRY [LARGE SCALE ANALYSIS]</scope>
    <source>
        <tissue>Leukemic T-cell</tissue>
    </source>
</reference>
<reference key="18">
    <citation type="journal article" date="2010" name="Sci. Signal.">
        <title>Quantitative phosphoproteomics reveals widespread full phosphorylation site occupancy during mitosis.</title>
        <authorList>
            <person name="Olsen J.V."/>
            <person name="Vermeulen M."/>
            <person name="Santamaria A."/>
            <person name="Kumar C."/>
            <person name="Miller M.L."/>
            <person name="Jensen L.J."/>
            <person name="Gnad F."/>
            <person name="Cox J."/>
            <person name="Jensen T.S."/>
            <person name="Nigg E.A."/>
            <person name="Brunak S."/>
            <person name="Mann M."/>
        </authorList>
    </citation>
    <scope>PHOSPHORYLATION [LARGE SCALE ANALYSIS] AT SER-1209</scope>
    <scope>IDENTIFICATION BY MASS SPECTROMETRY [LARGE SCALE ANALYSIS]</scope>
    <source>
        <tissue>Cervix carcinoma</tissue>
    </source>
</reference>
<reference key="19">
    <citation type="journal article" date="2011" name="BMC Syst. Biol.">
        <title>Initial characterization of the human central proteome.</title>
        <authorList>
            <person name="Burkard T.R."/>
            <person name="Planyavsky M."/>
            <person name="Kaupe I."/>
            <person name="Breitwieser F.P."/>
            <person name="Buerckstuemmer T."/>
            <person name="Bennett K.L."/>
            <person name="Superti-Furga G."/>
            <person name="Colinge J."/>
        </authorList>
    </citation>
    <scope>IDENTIFICATION BY MASS SPECTROMETRY [LARGE SCALE ANALYSIS]</scope>
</reference>
<reference key="20">
    <citation type="journal article" date="2011" name="Sci. Signal.">
        <title>System-wide temporal characterization of the proteome and phosphoproteome of human embryonic stem cell differentiation.</title>
        <authorList>
            <person name="Rigbolt K.T."/>
            <person name="Prokhorova T.A."/>
            <person name="Akimov V."/>
            <person name="Henningsen J."/>
            <person name="Johansen P.T."/>
            <person name="Kratchmarova I."/>
            <person name="Kassem M."/>
            <person name="Mann M."/>
            <person name="Olsen J.V."/>
            <person name="Blagoev B."/>
        </authorList>
    </citation>
    <scope>IDENTIFICATION BY MASS SPECTROMETRY [LARGE SCALE ANALYSIS]</scope>
</reference>
<reference key="21">
    <citation type="journal article" date="2013" name="J. Proteome Res.">
        <title>Toward a comprehensive characterization of a human cancer cell phosphoproteome.</title>
        <authorList>
            <person name="Zhou H."/>
            <person name="Di Palma S."/>
            <person name="Preisinger C."/>
            <person name="Peng M."/>
            <person name="Polat A.N."/>
            <person name="Heck A.J."/>
            <person name="Mohammed S."/>
        </authorList>
    </citation>
    <scope>PHOSPHORYLATION [LARGE SCALE ANALYSIS] AT SER-354; SER-1181 AND SER-1211</scope>
    <scope>IDENTIFICATION BY MASS SPECTROMETRY [LARGE SCALE ANALYSIS]</scope>
    <source>
        <tissue>Cervix carcinoma</tissue>
        <tissue>Erythroleukemia</tissue>
    </source>
</reference>
<reference key="22">
    <citation type="journal article" date="2018" name="J. Biol. Chem.">
        <title>Peroxisomal monoubiquitinated PEX5 interacts with the AAA ATPases PEX1 and PEX6 and is unfolded during its dislocation into the cytosol.</title>
        <authorList>
            <person name="Pedrosa A.G."/>
            <person name="Francisco T."/>
            <person name="Bicho D."/>
            <person name="Dias A.F."/>
            <person name="Barros-Barbosa A."/>
            <person name="Hagmann V."/>
            <person name="Dodt G."/>
            <person name="Rodrigues T.A."/>
            <person name="Azevedo J.E."/>
        </authorList>
    </citation>
    <scope>FUNCTION</scope>
</reference>
<reference key="23">
    <citation type="journal article" date="2015" name="Am. J. Hum. Genet.">
        <title>Heimler syndrome is caused by hypomorphic mutations in the peroxisome-biogenesis genes PEX1 and PEX6.</title>
        <authorList>
            <person name="Ratbi I."/>
            <person name="Falkenberg K.D."/>
            <person name="Sommen M."/>
            <person name="Al-Sheqaih N."/>
            <person name="Guaoua S."/>
            <person name="Vandeweyer G."/>
            <person name="Urquhart J.E."/>
            <person name="Chandler K.E."/>
            <person name="Williams S.G."/>
            <person name="Roberts N.A."/>
            <person name="El Alloussi M."/>
            <person name="Black G.C."/>
            <person name="Ferdinandusse S."/>
            <person name="Ramdi H."/>
            <person name="Heimler A."/>
            <person name="Fryer A."/>
            <person name="Lynch S.A."/>
            <person name="Cooper N."/>
            <person name="Ong K.R."/>
            <person name="Smith C.E."/>
            <person name="Inglehearn C.F."/>
            <person name="Mighell A.J."/>
            <person name="Elcock C."/>
            <person name="Poulter J.A."/>
            <person name="Tischkowitz M."/>
            <person name="Davies S.J."/>
            <person name="Sefiani A."/>
            <person name="Mironov A.A."/>
            <person name="Newman W.G."/>
            <person name="Waterham H.R."/>
            <person name="Van Camp G."/>
        </authorList>
    </citation>
    <scope>INVOLVEMENT IN HMLR1</scope>
    <scope>VARIANTS HMLR1 PRO-581 AND TRP-705</scope>
    <scope>CHARACTERIZATION OF VARIANTS HMLR1 PRO-581 AND TRP-705</scope>
</reference>
<reference key="24">
    <citation type="journal article" date="2005" name="Hum. Mutat.">
        <title>Novel PEX1 coding mutations and 5' UTR regulatory polymorphisms.</title>
        <authorList>
            <person name="Maxwell M.A."/>
            <person name="Leane P.B."/>
            <person name="Paton B.C."/>
            <person name="Crane D.I."/>
        </authorList>
    </citation>
    <scope>VARIANTS PBD1B THR-989 AND GLN-998</scope>
</reference>
<reference key="25">
    <citation type="journal article" date="2016" name="Eur. J. Hum. Genet.">
        <title>Spectrum of PEX1 and PEX6 variants in Heimler syndrome.</title>
        <authorList>
            <person name="Smith C.E."/>
            <person name="Poulter J.A."/>
            <person name="Levin A.V."/>
            <person name="Capasso J.E."/>
            <person name="Price S."/>
            <person name="Ben-Yosef T."/>
            <person name="Sharony R."/>
            <person name="Newman W.G."/>
            <person name="Shore R.C."/>
            <person name="Brookes S.J."/>
            <person name="Mighell A.J."/>
            <person name="Inglehearn C.F."/>
        </authorList>
    </citation>
    <scope>VARIANT HMLR1 THR-989</scope>
</reference>
<reference key="26">
    <citation type="journal article" date="2020" name="J. Pediatr. Endocrinol. Metab.">
        <title>Two different missense mutations of PEX genes in two similar patients with severe Zellweger syndrome: an argument on the genotype-phenotype correlation.</title>
        <authorList>
            <person name="Havali C."/>
            <person name="Dorum S."/>
            <person name="Akbas Y."/>
            <person name="Goeruekmez O."/>
            <person name="Hirfanoglu T."/>
        </authorList>
    </citation>
    <scope>VARIANT PBD1A PRO-597</scope>
</reference>
<reference key="27">
    <citation type="journal article" date="2021" name="J. Cell. Biochem.">
        <title>Compound heterozygous p. Arg949Trp and p. Gly970Ala mutations deteriorated the function of PEX1p: A study on PEX1 in a patient with Zellweger syndrome.</title>
        <authorList>
            <person name="Alamatsaz M."/>
            <person name="Jalalypour F."/>
            <person name="Hashemi M.S."/>
            <person name="Shafeghati Y."/>
            <person name="Nasr-Esfahani M.H."/>
            <person name="Ghaedi K."/>
        </authorList>
    </citation>
    <scope>VARIANTS PBD1A TRP-949 AND ALA-970</scope>
    <scope>CHARACTERIZATION OF VARIANTS PBD1A TRP-949 AND ALA-970</scope>
</reference>
<reference key="28">
    <citation type="journal article" date="2021" name="Transl. Pediatr.">
        <title>A Chinese newborn with Zellweger syndrome and compound heterozygous mutations novel in the PEX1 gene: a case report and literature review.</title>
        <authorList>
            <person name="Lu P."/>
            <person name="Ma L."/>
            <person name="Sun J."/>
            <person name="Gong X."/>
            <person name="Cai C."/>
        </authorList>
    </citation>
    <scope>VARIANT PBD1A 684-GLN--ALA-1283 DEL</scope>
</reference>